<comment type="function">
    <text evidence="1">Catalyzes a salvage reaction resulting in the formation of AMP, that is energically less costly than de novo synthesis.</text>
</comment>
<comment type="catalytic activity">
    <reaction evidence="1">
        <text>AMP + diphosphate = 5-phospho-alpha-D-ribose 1-diphosphate + adenine</text>
        <dbReference type="Rhea" id="RHEA:16609"/>
        <dbReference type="ChEBI" id="CHEBI:16708"/>
        <dbReference type="ChEBI" id="CHEBI:33019"/>
        <dbReference type="ChEBI" id="CHEBI:58017"/>
        <dbReference type="ChEBI" id="CHEBI:456215"/>
        <dbReference type="EC" id="2.4.2.7"/>
    </reaction>
</comment>
<comment type="pathway">
    <text evidence="1">Purine metabolism; AMP biosynthesis via salvage pathway; AMP from adenine: step 1/1.</text>
</comment>
<comment type="subunit">
    <text evidence="1">Homodimer.</text>
</comment>
<comment type="subcellular location">
    <subcellularLocation>
        <location evidence="1">Cytoplasm</location>
    </subcellularLocation>
</comment>
<comment type="similarity">
    <text evidence="1">Belongs to the purine/pyrimidine phosphoribosyltransferase family.</text>
</comment>
<accession>Q73M27</accession>
<evidence type="ECO:0000255" key="1">
    <source>
        <dbReference type="HAMAP-Rule" id="MF_00004"/>
    </source>
</evidence>
<sequence length="190" mass="20975">MTIAKIRCRLFIMKDKIIDAAIRRVPDFPKKGILFYDITGILVNPEVFSYCLDKMTEMYKDKKVDAVAAIEARGFIFAAPFAYKMGIPLILIRKKGKLPGETYSASYDLEYGQASVEVHKTDVVKGQKVLLLDDLIATGGTLNAARSILEEGGAKVVGFCGVVGLPFLNYSKVLGDLPVKTLIEYDSEKI</sequence>
<name>APT_TREDE</name>
<reference key="1">
    <citation type="journal article" date="2004" name="Proc. Natl. Acad. Sci. U.S.A.">
        <title>Comparison of the genome of the oral pathogen Treponema denticola with other spirochete genomes.</title>
        <authorList>
            <person name="Seshadri R."/>
            <person name="Myers G.S.A."/>
            <person name="Tettelin H."/>
            <person name="Eisen J.A."/>
            <person name="Heidelberg J.F."/>
            <person name="Dodson R.J."/>
            <person name="Davidsen T.M."/>
            <person name="DeBoy R.T."/>
            <person name="Fouts D.E."/>
            <person name="Haft D.H."/>
            <person name="Selengut J."/>
            <person name="Ren Q."/>
            <person name="Brinkac L.M."/>
            <person name="Madupu R."/>
            <person name="Kolonay J.F."/>
            <person name="Durkin S.A."/>
            <person name="Daugherty S.C."/>
            <person name="Shetty J."/>
            <person name="Shvartsbeyn A."/>
            <person name="Gebregeorgis E."/>
            <person name="Geer K."/>
            <person name="Tsegaye G."/>
            <person name="Malek J.A."/>
            <person name="Ayodeji B."/>
            <person name="Shatsman S."/>
            <person name="McLeod M.P."/>
            <person name="Smajs D."/>
            <person name="Howell J.K."/>
            <person name="Pal S."/>
            <person name="Amin A."/>
            <person name="Vashisth P."/>
            <person name="McNeill T.Z."/>
            <person name="Xiang Q."/>
            <person name="Sodergren E."/>
            <person name="Baca E."/>
            <person name="Weinstock G.M."/>
            <person name="Norris S.J."/>
            <person name="Fraser C.M."/>
            <person name="Paulsen I.T."/>
        </authorList>
    </citation>
    <scope>NUCLEOTIDE SEQUENCE [LARGE SCALE GENOMIC DNA]</scope>
    <source>
        <strain>ATCC 35405 / DSM 14222 / CIP 103919 / JCM 8153 / KCTC 15104</strain>
    </source>
</reference>
<dbReference type="EC" id="2.4.2.7" evidence="1"/>
<dbReference type="EMBL" id="AE017226">
    <property type="protein sequence ID" value="AAS12199.1"/>
    <property type="molecule type" value="Genomic_DNA"/>
</dbReference>
<dbReference type="RefSeq" id="NP_972288.1">
    <property type="nucleotide sequence ID" value="NC_002967.9"/>
</dbReference>
<dbReference type="SMR" id="Q73M27"/>
<dbReference type="STRING" id="243275.TDE_1684"/>
<dbReference type="PaxDb" id="243275-TDE_1684"/>
<dbReference type="KEGG" id="tde:TDE_1684"/>
<dbReference type="PATRIC" id="fig|243275.7.peg.1611"/>
<dbReference type="eggNOG" id="COG0503">
    <property type="taxonomic scope" value="Bacteria"/>
</dbReference>
<dbReference type="HOGENOM" id="CLU_063339_3_0_12"/>
<dbReference type="OrthoDB" id="9803963at2"/>
<dbReference type="UniPathway" id="UPA00588">
    <property type="reaction ID" value="UER00646"/>
</dbReference>
<dbReference type="Proteomes" id="UP000008212">
    <property type="component" value="Chromosome"/>
</dbReference>
<dbReference type="GO" id="GO:0005737">
    <property type="term" value="C:cytoplasm"/>
    <property type="evidence" value="ECO:0007669"/>
    <property type="project" value="UniProtKB-SubCell"/>
</dbReference>
<dbReference type="GO" id="GO:0003999">
    <property type="term" value="F:adenine phosphoribosyltransferase activity"/>
    <property type="evidence" value="ECO:0007669"/>
    <property type="project" value="UniProtKB-UniRule"/>
</dbReference>
<dbReference type="GO" id="GO:0006168">
    <property type="term" value="P:adenine salvage"/>
    <property type="evidence" value="ECO:0007669"/>
    <property type="project" value="InterPro"/>
</dbReference>
<dbReference type="GO" id="GO:0044209">
    <property type="term" value="P:AMP salvage"/>
    <property type="evidence" value="ECO:0007669"/>
    <property type="project" value="UniProtKB-UniRule"/>
</dbReference>
<dbReference type="GO" id="GO:0006166">
    <property type="term" value="P:purine ribonucleoside salvage"/>
    <property type="evidence" value="ECO:0007669"/>
    <property type="project" value="UniProtKB-KW"/>
</dbReference>
<dbReference type="CDD" id="cd06223">
    <property type="entry name" value="PRTases_typeI"/>
    <property type="match status" value="1"/>
</dbReference>
<dbReference type="FunFam" id="3.40.50.2020:FF:000021">
    <property type="entry name" value="Adenine phosphoribosyltransferase"/>
    <property type="match status" value="1"/>
</dbReference>
<dbReference type="Gene3D" id="3.40.50.2020">
    <property type="match status" value="1"/>
</dbReference>
<dbReference type="HAMAP" id="MF_00004">
    <property type="entry name" value="Aden_phosphoribosyltr"/>
    <property type="match status" value="1"/>
</dbReference>
<dbReference type="InterPro" id="IPR005764">
    <property type="entry name" value="Ade_phspho_trans"/>
</dbReference>
<dbReference type="InterPro" id="IPR050120">
    <property type="entry name" value="Adenine_PRTase"/>
</dbReference>
<dbReference type="InterPro" id="IPR000836">
    <property type="entry name" value="PRibTrfase_dom"/>
</dbReference>
<dbReference type="InterPro" id="IPR029057">
    <property type="entry name" value="PRTase-like"/>
</dbReference>
<dbReference type="NCBIfam" id="TIGR01090">
    <property type="entry name" value="apt"/>
    <property type="match status" value="1"/>
</dbReference>
<dbReference type="NCBIfam" id="NF002634">
    <property type="entry name" value="PRK02304.1-3"/>
    <property type="match status" value="1"/>
</dbReference>
<dbReference type="NCBIfam" id="NF002636">
    <property type="entry name" value="PRK02304.1-5"/>
    <property type="match status" value="1"/>
</dbReference>
<dbReference type="PANTHER" id="PTHR11776">
    <property type="entry name" value="ADENINE PHOSPHORIBOSYLTRANSFERASE"/>
    <property type="match status" value="1"/>
</dbReference>
<dbReference type="PANTHER" id="PTHR11776:SF7">
    <property type="entry name" value="PHOSPHORIBOSYLTRANSFERASE DOMAIN-CONTAINING PROTEIN"/>
    <property type="match status" value="1"/>
</dbReference>
<dbReference type="Pfam" id="PF00156">
    <property type="entry name" value="Pribosyltran"/>
    <property type="match status" value="1"/>
</dbReference>
<dbReference type="SUPFAM" id="SSF53271">
    <property type="entry name" value="PRTase-like"/>
    <property type="match status" value="1"/>
</dbReference>
<dbReference type="PROSITE" id="PS00103">
    <property type="entry name" value="PUR_PYR_PR_TRANSFER"/>
    <property type="match status" value="1"/>
</dbReference>
<proteinExistence type="inferred from homology"/>
<organism>
    <name type="scientific">Treponema denticola (strain ATCC 35405 / DSM 14222 / CIP 103919 / JCM 8153 / KCTC 15104)</name>
    <dbReference type="NCBI Taxonomy" id="243275"/>
    <lineage>
        <taxon>Bacteria</taxon>
        <taxon>Pseudomonadati</taxon>
        <taxon>Spirochaetota</taxon>
        <taxon>Spirochaetia</taxon>
        <taxon>Spirochaetales</taxon>
        <taxon>Treponemataceae</taxon>
        <taxon>Treponema</taxon>
    </lineage>
</organism>
<keyword id="KW-0963">Cytoplasm</keyword>
<keyword id="KW-0328">Glycosyltransferase</keyword>
<keyword id="KW-0660">Purine salvage</keyword>
<keyword id="KW-1185">Reference proteome</keyword>
<keyword id="KW-0808">Transferase</keyword>
<feature type="chain" id="PRO_0000149480" description="Adenine phosphoribosyltransferase">
    <location>
        <begin position="1"/>
        <end position="190"/>
    </location>
</feature>
<gene>
    <name evidence="1" type="primary">apt</name>
    <name type="ordered locus">TDE_1684</name>
</gene>
<protein>
    <recommendedName>
        <fullName evidence="1">Adenine phosphoribosyltransferase</fullName>
        <shortName evidence="1">APRT</shortName>
        <ecNumber evidence="1">2.4.2.7</ecNumber>
    </recommendedName>
</protein>